<dbReference type="EMBL" id="EU431223">
    <property type="protein sequence ID" value="ABY86802.1"/>
    <property type="molecule type" value="Genomic_DNA"/>
</dbReference>
<dbReference type="RefSeq" id="YP_001671703.1">
    <property type="nucleotide sequence ID" value="NC_010323.1"/>
</dbReference>
<dbReference type="SMR" id="B1A955"/>
<dbReference type="GeneID" id="5878407"/>
<dbReference type="KEGG" id="cpap:5878407"/>
<dbReference type="OrthoDB" id="1844838at2759"/>
<dbReference type="GO" id="GO:0009535">
    <property type="term" value="C:chloroplast thylakoid membrane"/>
    <property type="evidence" value="ECO:0007669"/>
    <property type="project" value="UniProtKB-SubCell"/>
</dbReference>
<dbReference type="GO" id="GO:0009522">
    <property type="term" value="C:photosystem I"/>
    <property type="evidence" value="ECO:0007669"/>
    <property type="project" value="UniProtKB-KW"/>
</dbReference>
<dbReference type="GO" id="GO:0015979">
    <property type="term" value="P:photosynthesis"/>
    <property type="evidence" value="ECO:0007669"/>
    <property type="project" value="UniProtKB-UniRule"/>
</dbReference>
<dbReference type="FunFam" id="1.20.5.510:FF:000001">
    <property type="entry name" value="Photosystem I reaction center subunit IX"/>
    <property type="match status" value="1"/>
</dbReference>
<dbReference type="Gene3D" id="1.20.5.510">
    <property type="entry name" value="Single helix bin"/>
    <property type="match status" value="1"/>
</dbReference>
<dbReference type="HAMAP" id="MF_00522">
    <property type="entry name" value="PSI_PsaJ"/>
    <property type="match status" value="1"/>
</dbReference>
<dbReference type="InterPro" id="IPR002615">
    <property type="entry name" value="PSI_PsaJ"/>
</dbReference>
<dbReference type="InterPro" id="IPR036062">
    <property type="entry name" value="PSI_PsaJ_sf"/>
</dbReference>
<dbReference type="PANTHER" id="PTHR36082">
    <property type="match status" value="1"/>
</dbReference>
<dbReference type="PANTHER" id="PTHR36082:SF2">
    <property type="entry name" value="PHOTOSYSTEM I REACTION CENTER SUBUNIT IX"/>
    <property type="match status" value="1"/>
</dbReference>
<dbReference type="Pfam" id="PF01701">
    <property type="entry name" value="PSI_PsaJ"/>
    <property type="match status" value="1"/>
</dbReference>
<dbReference type="SUPFAM" id="SSF81544">
    <property type="entry name" value="Subunit IX of photosystem I reaction centre, PsaJ"/>
    <property type="match status" value="1"/>
</dbReference>
<comment type="function">
    <text evidence="1">May help in the organization of the PsaE and PsaF subunits.</text>
</comment>
<comment type="subcellular location">
    <subcellularLocation>
        <location evidence="1">Plastid</location>
        <location evidence="1">Chloroplast thylakoid membrane</location>
        <topology evidence="1">Single-pass membrane protein</topology>
    </subcellularLocation>
</comment>
<comment type="similarity">
    <text evidence="1">Belongs to the PsaJ family.</text>
</comment>
<gene>
    <name evidence="1" type="primary">psaJ</name>
</gene>
<sequence length="44" mass="5009">MRDLKTYLSVAPVLSTLWFGSLAGLLIEINRLFPDALTFPFFSF</sequence>
<protein>
    <recommendedName>
        <fullName evidence="1">Photosystem I reaction center subunit IX</fullName>
    </recommendedName>
    <alternativeName>
        <fullName evidence="1">PSI-J</fullName>
    </alternativeName>
</protein>
<organism>
    <name type="scientific">Carica papaya</name>
    <name type="common">Papaya</name>
    <dbReference type="NCBI Taxonomy" id="3649"/>
    <lineage>
        <taxon>Eukaryota</taxon>
        <taxon>Viridiplantae</taxon>
        <taxon>Streptophyta</taxon>
        <taxon>Embryophyta</taxon>
        <taxon>Tracheophyta</taxon>
        <taxon>Spermatophyta</taxon>
        <taxon>Magnoliopsida</taxon>
        <taxon>eudicotyledons</taxon>
        <taxon>Gunneridae</taxon>
        <taxon>Pentapetalae</taxon>
        <taxon>rosids</taxon>
        <taxon>malvids</taxon>
        <taxon>Brassicales</taxon>
        <taxon>Caricaceae</taxon>
        <taxon>Carica</taxon>
    </lineage>
</organism>
<name>PSAJ_CARPA</name>
<geneLocation type="chloroplast"/>
<evidence type="ECO:0000255" key="1">
    <source>
        <dbReference type="HAMAP-Rule" id="MF_00522"/>
    </source>
</evidence>
<accession>B1A955</accession>
<proteinExistence type="inferred from homology"/>
<reference key="1">
    <citation type="journal article" date="2008" name="Nature">
        <title>The draft genome of the transgenic tropical fruit tree papaya (Carica papaya Linnaeus).</title>
        <authorList>
            <person name="Ming R."/>
            <person name="Hou S."/>
            <person name="Feng Y."/>
            <person name="Yu Q."/>
            <person name="Dionne-Laporte A."/>
            <person name="Saw J.H."/>
            <person name="Senin P."/>
            <person name="Wang W."/>
            <person name="Ly B.V."/>
            <person name="Lewis K.L."/>
            <person name="Salzberg S.L."/>
            <person name="Feng L."/>
            <person name="Jones M.R."/>
            <person name="Skelton R.L."/>
            <person name="Murray J.E."/>
            <person name="Chen C."/>
            <person name="Qian W."/>
            <person name="Shen J."/>
            <person name="Du P."/>
            <person name="Eustice M."/>
            <person name="Tong E."/>
            <person name="Tang H."/>
            <person name="Lyons E."/>
            <person name="Paull R.E."/>
            <person name="Michael T.P."/>
            <person name="Wall K."/>
            <person name="Rice D.W."/>
            <person name="Albert H."/>
            <person name="Wang M.L."/>
            <person name="Zhu Y.J."/>
            <person name="Schatz M."/>
            <person name="Nagarajan N."/>
            <person name="Acob R.A."/>
            <person name="Guan P."/>
            <person name="Blas A."/>
            <person name="Wai C.M."/>
            <person name="Ackerman C.M."/>
            <person name="Ren Y."/>
            <person name="Liu C."/>
            <person name="Wang J."/>
            <person name="Wang J."/>
            <person name="Na J.K."/>
            <person name="Shakirov E.V."/>
            <person name="Haas B."/>
            <person name="Thimmapuram J."/>
            <person name="Nelson D."/>
            <person name="Wang X."/>
            <person name="Bowers J.E."/>
            <person name="Gschwend A.R."/>
            <person name="Delcher A.L."/>
            <person name="Singh R."/>
            <person name="Suzuki J.Y."/>
            <person name="Tripathi S."/>
            <person name="Neupane K."/>
            <person name="Wei H."/>
            <person name="Irikura B."/>
            <person name="Paidi M."/>
            <person name="Jiang N."/>
            <person name="Zhang W."/>
            <person name="Presting G."/>
            <person name="Windsor A."/>
            <person name="Navajas-Perez R."/>
            <person name="Torres M.J."/>
            <person name="Feltus F.A."/>
            <person name="Porter B."/>
            <person name="Li Y."/>
            <person name="Burroughs A.M."/>
            <person name="Luo M.C."/>
            <person name="Liu L."/>
            <person name="Christopher D.A."/>
            <person name="Mount S.M."/>
            <person name="Moore P.H."/>
            <person name="Sugimura T."/>
            <person name="Jiang J."/>
            <person name="Schuler M.A."/>
            <person name="Friedman V."/>
            <person name="Mitchell-Olds T."/>
            <person name="Shippen D.E."/>
            <person name="dePamphilis C.W."/>
            <person name="Palmer J.D."/>
            <person name="Freeling M."/>
            <person name="Paterson A.H."/>
            <person name="Gonsalves D."/>
            <person name="Wang L."/>
            <person name="Alam M."/>
        </authorList>
    </citation>
    <scope>NUCLEOTIDE SEQUENCE [LARGE SCALE GENOMIC DNA]</scope>
    <source>
        <strain>cv. SunUp</strain>
    </source>
</reference>
<keyword id="KW-0150">Chloroplast</keyword>
<keyword id="KW-0472">Membrane</keyword>
<keyword id="KW-0602">Photosynthesis</keyword>
<keyword id="KW-0603">Photosystem I</keyword>
<keyword id="KW-0934">Plastid</keyword>
<keyword id="KW-0793">Thylakoid</keyword>
<keyword id="KW-0812">Transmembrane</keyword>
<keyword id="KW-1133">Transmembrane helix</keyword>
<feature type="chain" id="PRO_0000354133" description="Photosystem I reaction center subunit IX">
    <location>
        <begin position="1"/>
        <end position="44"/>
    </location>
</feature>
<feature type="transmembrane region" description="Helical" evidence="1">
    <location>
        <begin position="7"/>
        <end position="27"/>
    </location>
</feature>